<accession>Q2YLG4</accession>
<comment type="function">
    <text evidence="1">Converts 2C-methyl-D-erythritol 2,4-cyclodiphosphate (ME-2,4cPP) into 1-hydroxy-2-methyl-2-(E)-butenyl 4-diphosphate.</text>
</comment>
<comment type="catalytic activity">
    <reaction evidence="1">
        <text>(2E)-4-hydroxy-3-methylbut-2-enyl diphosphate + oxidized [flavodoxin] + H2O + 2 H(+) = 2-C-methyl-D-erythritol 2,4-cyclic diphosphate + reduced [flavodoxin]</text>
        <dbReference type="Rhea" id="RHEA:43604"/>
        <dbReference type="Rhea" id="RHEA-COMP:10622"/>
        <dbReference type="Rhea" id="RHEA-COMP:10623"/>
        <dbReference type="ChEBI" id="CHEBI:15377"/>
        <dbReference type="ChEBI" id="CHEBI:15378"/>
        <dbReference type="ChEBI" id="CHEBI:57618"/>
        <dbReference type="ChEBI" id="CHEBI:58210"/>
        <dbReference type="ChEBI" id="CHEBI:58483"/>
        <dbReference type="ChEBI" id="CHEBI:128753"/>
        <dbReference type="EC" id="1.17.7.3"/>
    </reaction>
</comment>
<comment type="cofactor">
    <cofactor evidence="1">
        <name>[4Fe-4S] cluster</name>
        <dbReference type="ChEBI" id="CHEBI:49883"/>
    </cofactor>
    <text evidence="1">Binds 1 [4Fe-4S] cluster.</text>
</comment>
<comment type="pathway">
    <text evidence="1">Isoprenoid biosynthesis; isopentenyl diphosphate biosynthesis via DXP pathway; isopentenyl diphosphate from 1-deoxy-D-xylulose 5-phosphate: step 5/6.</text>
</comment>
<comment type="similarity">
    <text evidence="1">Belongs to the IspG family.</text>
</comment>
<gene>
    <name evidence="1" type="primary">ispG</name>
    <name type="ordered locus">BAB1_1788</name>
</gene>
<organism>
    <name type="scientific">Brucella abortus (strain 2308)</name>
    <dbReference type="NCBI Taxonomy" id="359391"/>
    <lineage>
        <taxon>Bacteria</taxon>
        <taxon>Pseudomonadati</taxon>
        <taxon>Pseudomonadota</taxon>
        <taxon>Alphaproteobacteria</taxon>
        <taxon>Hyphomicrobiales</taxon>
        <taxon>Brucellaceae</taxon>
        <taxon>Brucella/Ochrobactrum group</taxon>
        <taxon>Brucella</taxon>
    </lineage>
</organism>
<feature type="chain" id="PRO_1000011445" description="4-hydroxy-3-methylbut-2-en-1-yl diphosphate synthase (flavodoxin)">
    <location>
        <begin position="1"/>
        <end position="420"/>
    </location>
</feature>
<feature type="binding site" evidence="1">
    <location>
        <position position="307"/>
    </location>
    <ligand>
        <name>[4Fe-4S] cluster</name>
        <dbReference type="ChEBI" id="CHEBI:49883"/>
    </ligand>
</feature>
<feature type="binding site" evidence="1">
    <location>
        <position position="310"/>
    </location>
    <ligand>
        <name>[4Fe-4S] cluster</name>
        <dbReference type="ChEBI" id="CHEBI:49883"/>
    </ligand>
</feature>
<feature type="binding site" evidence="1">
    <location>
        <position position="353"/>
    </location>
    <ligand>
        <name>[4Fe-4S] cluster</name>
        <dbReference type="ChEBI" id="CHEBI:49883"/>
    </ligand>
</feature>
<feature type="binding site" evidence="1">
    <location>
        <position position="360"/>
    </location>
    <ligand>
        <name>[4Fe-4S] cluster</name>
        <dbReference type="ChEBI" id="CHEBI:49883"/>
    </ligand>
</feature>
<reference key="1">
    <citation type="journal article" date="2005" name="Infect. Immun.">
        <title>Whole-genome analyses of speciation events in pathogenic Brucellae.</title>
        <authorList>
            <person name="Chain P.S."/>
            <person name="Comerci D.J."/>
            <person name="Tolmasky M.E."/>
            <person name="Larimer F.W."/>
            <person name="Malfatti S.A."/>
            <person name="Vergez L.M."/>
            <person name="Aguero F."/>
            <person name="Land M.L."/>
            <person name="Ugalde R.A."/>
            <person name="Garcia E."/>
        </authorList>
    </citation>
    <scope>NUCLEOTIDE SEQUENCE [LARGE SCALE GENOMIC DNA]</scope>
    <source>
        <strain>2308</strain>
    </source>
</reference>
<evidence type="ECO:0000255" key="1">
    <source>
        <dbReference type="HAMAP-Rule" id="MF_00159"/>
    </source>
</evidence>
<proteinExistence type="inferred from homology"/>
<protein>
    <recommendedName>
        <fullName evidence="1">4-hydroxy-3-methylbut-2-en-1-yl diphosphate synthase (flavodoxin)</fullName>
        <ecNumber evidence="1">1.17.7.3</ecNumber>
    </recommendedName>
    <alternativeName>
        <fullName evidence="1">1-hydroxy-2-methyl-2-(E)-butenyl 4-diphosphate synthase</fullName>
    </alternativeName>
</protein>
<keyword id="KW-0004">4Fe-4S</keyword>
<keyword id="KW-0408">Iron</keyword>
<keyword id="KW-0411">Iron-sulfur</keyword>
<keyword id="KW-0414">Isoprene biosynthesis</keyword>
<keyword id="KW-0479">Metal-binding</keyword>
<keyword id="KW-0560">Oxidoreductase</keyword>
<keyword id="KW-1185">Reference proteome</keyword>
<name>ISPG_BRUA2</name>
<dbReference type="EC" id="1.17.7.3" evidence="1"/>
<dbReference type="EMBL" id="AM040264">
    <property type="protein sequence ID" value="CAJ11744.1"/>
    <property type="molecule type" value="Genomic_DNA"/>
</dbReference>
<dbReference type="RefSeq" id="WP_002966963.1">
    <property type="nucleotide sequence ID" value="NZ_KN046823.1"/>
</dbReference>
<dbReference type="SMR" id="Q2YLG4"/>
<dbReference type="STRING" id="359391.BAB1_1788"/>
<dbReference type="GeneID" id="93017877"/>
<dbReference type="KEGG" id="bmf:BAB1_1788"/>
<dbReference type="PATRIC" id="fig|359391.11.peg.299"/>
<dbReference type="HOGENOM" id="CLU_042258_1_0_5"/>
<dbReference type="PhylomeDB" id="Q2YLG4"/>
<dbReference type="UniPathway" id="UPA00056">
    <property type="reaction ID" value="UER00096"/>
</dbReference>
<dbReference type="Proteomes" id="UP000002719">
    <property type="component" value="Chromosome I"/>
</dbReference>
<dbReference type="GO" id="GO:0051539">
    <property type="term" value="F:4 iron, 4 sulfur cluster binding"/>
    <property type="evidence" value="ECO:0007669"/>
    <property type="project" value="UniProtKB-UniRule"/>
</dbReference>
<dbReference type="GO" id="GO:0046429">
    <property type="term" value="F:4-hydroxy-3-methylbut-2-en-1-yl diphosphate synthase activity (ferredoxin)"/>
    <property type="evidence" value="ECO:0007669"/>
    <property type="project" value="UniProtKB-UniRule"/>
</dbReference>
<dbReference type="GO" id="GO:0141197">
    <property type="term" value="F:4-hydroxy-3-methylbut-2-enyl-diphosphate synthase activity (flavodoxin)"/>
    <property type="evidence" value="ECO:0007669"/>
    <property type="project" value="UniProtKB-EC"/>
</dbReference>
<dbReference type="GO" id="GO:0005506">
    <property type="term" value="F:iron ion binding"/>
    <property type="evidence" value="ECO:0007669"/>
    <property type="project" value="InterPro"/>
</dbReference>
<dbReference type="GO" id="GO:0019288">
    <property type="term" value="P:isopentenyl diphosphate biosynthetic process, methylerythritol 4-phosphate pathway"/>
    <property type="evidence" value="ECO:0007669"/>
    <property type="project" value="UniProtKB-UniRule"/>
</dbReference>
<dbReference type="GO" id="GO:0016114">
    <property type="term" value="P:terpenoid biosynthetic process"/>
    <property type="evidence" value="ECO:0007669"/>
    <property type="project" value="InterPro"/>
</dbReference>
<dbReference type="FunFam" id="3.30.413.10:FF:000012">
    <property type="entry name" value="4-hydroxy-3-methylbut-2-en-1-yl diphosphate synthase (flavodoxin)"/>
    <property type="match status" value="1"/>
</dbReference>
<dbReference type="Gene3D" id="3.20.20.20">
    <property type="entry name" value="Dihydropteroate synthase-like"/>
    <property type="match status" value="1"/>
</dbReference>
<dbReference type="Gene3D" id="3.30.413.10">
    <property type="entry name" value="Sulfite Reductase Hemoprotein, domain 1"/>
    <property type="match status" value="1"/>
</dbReference>
<dbReference type="HAMAP" id="MF_00159">
    <property type="entry name" value="IspG"/>
    <property type="match status" value="1"/>
</dbReference>
<dbReference type="InterPro" id="IPR011005">
    <property type="entry name" value="Dihydropteroate_synth-like_sf"/>
</dbReference>
<dbReference type="InterPro" id="IPR016425">
    <property type="entry name" value="IspG_bac"/>
</dbReference>
<dbReference type="InterPro" id="IPR004588">
    <property type="entry name" value="IspG_bac-typ"/>
</dbReference>
<dbReference type="InterPro" id="IPR045854">
    <property type="entry name" value="NO2/SO3_Rdtase_4Fe4S_sf"/>
</dbReference>
<dbReference type="NCBIfam" id="TIGR00612">
    <property type="entry name" value="ispG_gcpE"/>
    <property type="match status" value="1"/>
</dbReference>
<dbReference type="NCBIfam" id="NF001540">
    <property type="entry name" value="PRK00366.1"/>
    <property type="match status" value="1"/>
</dbReference>
<dbReference type="PANTHER" id="PTHR30454">
    <property type="entry name" value="4-HYDROXY-3-METHYLBUT-2-EN-1-YL DIPHOSPHATE SYNTHASE"/>
    <property type="match status" value="1"/>
</dbReference>
<dbReference type="PANTHER" id="PTHR30454:SF0">
    <property type="entry name" value="4-HYDROXY-3-METHYLBUT-2-EN-1-YL DIPHOSPHATE SYNTHASE (FERREDOXIN), CHLOROPLASTIC"/>
    <property type="match status" value="1"/>
</dbReference>
<dbReference type="Pfam" id="PF04551">
    <property type="entry name" value="GcpE"/>
    <property type="match status" value="1"/>
</dbReference>
<dbReference type="PIRSF" id="PIRSF004640">
    <property type="entry name" value="IspG"/>
    <property type="match status" value="1"/>
</dbReference>
<dbReference type="SUPFAM" id="SSF56014">
    <property type="entry name" value="Nitrite and sulphite reductase 4Fe-4S domain-like"/>
    <property type="match status" value="1"/>
</dbReference>
<sequence length="420" mass="45046">MSSETVSYFSHPFPRRQSVGVSVGGVIVGGSAPVVVQSMTNTDTADVDSTVAQVAALHRAGSEIVRITVDRDESAAAVPKIRERLERLGHDVPLVGDFHYIGHKLLADHPACAEALSKYRINPGNVGFKDKKDKQFADIVEMAIRYDKPVRIGVNWGSLDQELLTALMDRNQAEGAPLSAQDVMREAIVQSALISANLAEEIGLGRDKIILSAKVSQVQDLIAVYTMLAQRSNHALHLGLTEAGMGTKGIVASSAAMGILLQQGIGDTIRISLTPEPGGDRTREVQVAQELLQTMGFRQFVPIVAACPGCGRTTSTVFQELAQTIQEDIRRNMPLWREKYPGVEALSVAVMGCIVNGPGESKHADIGISLPGTGETPSAPVFVDGKKVTTLRGPGIAEDFQKMVADYIENRFGLGRKIAS</sequence>